<gene>
    <name evidence="1" type="primary">gltX</name>
    <name type="ordered locus">ECA3291</name>
</gene>
<feature type="chain" id="PRO_0000119563" description="Glutamate--tRNA ligase">
    <location>
        <begin position="1"/>
        <end position="471"/>
    </location>
</feature>
<feature type="short sequence motif" description="'HIGH' region" evidence="1">
    <location>
        <begin position="9"/>
        <end position="19"/>
    </location>
</feature>
<feature type="short sequence motif" description="'KMSKS' region" evidence="1">
    <location>
        <begin position="237"/>
        <end position="241"/>
    </location>
</feature>
<feature type="binding site" evidence="1">
    <location>
        <position position="240"/>
    </location>
    <ligand>
        <name>ATP</name>
        <dbReference type="ChEBI" id="CHEBI:30616"/>
    </ligand>
</feature>
<proteinExistence type="inferred from homology"/>
<accession>Q6D206</accession>
<protein>
    <recommendedName>
        <fullName evidence="1">Glutamate--tRNA ligase</fullName>
        <ecNumber evidence="1">6.1.1.17</ecNumber>
    </recommendedName>
    <alternativeName>
        <fullName evidence="1">Glutamyl-tRNA synthetase</fullName>
        <shortName evidence="1">GluRS</shortName>
    </alternativeName>
</protein>
<evidence type="ECO:0000255" key="1">
    <source>
        <dbReference type="HAMAP-Rule" id="MF_00022"/>
    </source>
</evidence>
<sequence length="471" mass="53367">MKIKTRFAPSPTGYLHVGGARTALYSWLFARHQDGEFVLRIEDTDLERSTQDAIDAIMDGMNWLSLNWDEGPYYQTKRFDRYNAVIDQMLENGTAYKCYCSKERLEALREQQMEKGDKPRYDGHCRGSHEHHADNEPHVVRFLNPQEGSVIFNDRIRGPIEFSNQELDDLIIRRTDGSPTYNFCVVIDDWDMEITHVIRGEDHINNTPRQINILKALGAPVPEYAHVSMILGDDGKKLSKRHGAVGVMQYRDDGYLPEALLNYLVRLGWSSGDQEIFSIDEMKSLFSLDAVNKSASAFNTEKLQWLNHHYINHLPAEYVATHLSWHIEQAGLDTRTGPQLSELVGLLGERCKTLKEMADSCRYFYEDFAEFDADAAKKHLRPVARQPLELVREKLAAITSWTAENIHHAIQGTADELGQGMGKVGMPLRVAVTGAGQSPGVDVTVHAIGQQRSLARIDKALAFIAERETQQ</sequence>
<dbReference type="EC" id="6.1.1.17" evidence="1"/>
<dbReference type="EMBL" id="BX950851">
    <property type="protein sequence ID" value="CAG76189.1"/>
    <property type="molecule type" value="Genomic_DNA"/>
</dbReference>
<dbReference type="RefSeq" id="WP_011094808.1">
    <property type="nucleotide sequence ID" value="NC_004547.2"/>
</dbReference>
<dbReference type="SMR" id="Q6D206"/>
<dbReference type="STRING" id="218491.ECA3291"/>
<dbReference type="KEGG" id="eca:ECA3291"/>
<dbReference type="PATRIC" id="fig|218491.5.peg.3339"/>
<dbReference type="eggNOG" id="COG0008">
    <property type="taxonomic scope" value="Bacteria"/>
</dbReference>
<dbReference type="HOGENOM" id="CLU_015768_6_0_6"/>
<dbReference type="OrthoDB" id="9807503at2"/>
<dbReference type="Proteomes" id="UP000007966">
    <property type="component" value="Chromosome"/>
</dbReference>
<dbReference type="GO" id="GO:0005829">
    <property type="term" value="C:cytosol"/>
    <property type="evidence" value="ECO:0007669"/>
    <property type="project" value="TreeGrafter"/>
</dbReference>
<dbReference type="GO" id="GO:0005524">
    <property type="term" value="F:ATP binding"/>
    <property type="evidence" value="ECO:0007669"/>
    <property type="project" value="UniProtKB-UniRule"/>
</dbReference>
<dbReference type="GO" id="GO:0004818">
    <property type="term" value="F:glutamate-tRNA ligase activity"/>
    <property type="evidence" value="ECO:0007669"/>
    <property type="project" value="UniProtKB-UniRule"/>
</dbReference>
<dbReference type="GO" id="GO:0000049">
    <property type="term" value="F:tRNA binding"/>
    <property type="evidence" value="ECO:0007669"/>
    <property type="project" value="InterPro"/>
</dbReference>
<dbReference type="GO" id="GO:0008270">
    <property type="term" value="F:zinc ion binding"/>
    <property type="evidence" value="ECO:0007669"/>
    <property type="project" value="UniProtKB-UniRule"/>
</dbReference>
<dbReference type="GO" id="GO:0006424">
    <property type="term" value="P:glutamyl-tRNA aminoacylation"/>
    <property type="evidence" value="ECO:0007669"/>
    <property type="project" value="UniProtKB-UniRule"/>
</dbReference>
<dbReference type="CDD" id="cd00808">
    <property type="entry name" value="GluRS_core"/>
    <property type="match status" value="1"/>
</dbReference>
<dbReference type="FunFam" id="1.10.10.350:FF:000001">
    <property type="entry name" value="Glutamate--tRNA ligase"/>
    <property type="match status" value="1"/>
</dbReference>
<dbReference type="FunFam" id="3.40.50.620:FF:000007">
    <property type="entry name" value="Glutamate--tRNA ligase"/>
    <property type="match status" value="1"/>
</dbReference>
<dbReference type="Gene3D" id="1.10.10.350">
    <property type="match status" value="1"/>
</dbReference>
<dbReference type="Gene3D" id="3.40.50.620">
    <property type="entry name" value="HUPs"/>
    <property type="match status" value="1"/>
</dbReference>
<dbReference type="HAMAP" id="MF_00022">
    <property type="entry name" value="Glu_tRNA_synth_type1"/>
    <property type="match status" value="1"/>
</dbReference>
<dbReference type="InterPro" id="IPR045462">
    <property type="entry name" value="aa-tRNA-synth_I_cd-bd"/>
</dbReference>
<dbReference type="InterPro" id="IPR020751">
    <property type="entry name" value="aa-tRNA-synth_I_codon-bd_sub2"/>
</dbReference>
<dbReference type="InterPro" id="IPR001412">
    <property type="entry name" value="aa-tRNA-synth_I_CS"/>
</dbReference>
<dbReference type="InterPro" id="IPR008925">
    <property type="entry name" value="aa_tRNA-synth_I_cd-bd_sf"/>
</dbReference>
<dbReference type="InterPro" id="IPR004527">
    <property type="entry name" value="Glu-tRNA-ligase_bac/mito"/>
</dbReference>
<dbReference type="InterPro" id="IPR000924">
    <property type="entry name" value="Glu/Gln-tRNA-synth"/>
</dbReference>
<dbReference type="InterPro" id="IPR020058">
    <property type="entry name" value="Glu/Gln-tRNA-synth_Ib_cat-dom"/>
</dbReference>
<dbReference type="InterPro" id="IPR049940">
    <property type="entry name" value="GluQ/Sye"/>
</dbReference>
<dbReference type="InterPro" id="IPR033910">
    <property type="entry name" value="GluRS_core"/>
</dbReference>
<dbReference type="InterPro" id="IPR014729">
    <property type="entry name" value="Rossmann-like_a/b/a_fold"/>
</dbReference>
<dbReference type="NCBIfam" id="TIGR00464">
    <property type="entry name" value="gltX_bact"/>
    <property type="match status" value="1"/>
</dbReference>
<dbReference type="PANTHER" id="PTHR43311">
    <property type="entry name" value="GLUTAMATE--TRNA LIGASE"/>
    <property type="match status" value="1"/>
</dbReference>
<dbReference type="PANTHER" id="PTHR43311:SF2">
    <property type="entry name" value="GLUTAMATE--TRNA LIGASE, MITOCHONDRIAL-RELATED"/>
    <property type="match status" value="1"/>
</dbReference>
<dbReference type="Pfam" id="PF19269">
    <property type="entry name" value="Anticodon_2"/>
    <property type="match status" value="1"/>
</dbReference>
<dbReference type="Pfam" id="PF00749">
    <property type="entry name" value="tRNA-synt_1c"/>
    <property type="match status" value="1"/>
</dbReference>
<dbReference type="PRINTS" id="PR00987">
    <property type="entry name" value="TRNASYNTHGLU"/>
</dbReference>
<dbReference type="SUPFAM" id="SSF48163">
    <property type="entry name" value="An anticodon-binding domain of class I aminoacyl-tRNA synthetases"/>
    <property type="match status" value="1"/>
</dbReference>
<dbReference type="SUPFAM" id="SSF52374">
    <property type="entry name" value="Nucleotidylyl transferase"/>
    <property type="match status" value="1"/>
</dbReference>
<dbReference type="PROSITE" id="PS00178">
    <property type="entry name" value="AA_TRNA_LIGASE_I"/>
    <property type="match status" value="1"/>
</dbReference>
<comment type="function">
    <text evidence="1">Catalyzes the attachment of glutamate to tRNA(Glu) in a two-step reaction: glutamate is first activated by ATP to form Glu-AMP and then transferred to the acceptor end of tRNA(Glu).</text>
</comment>
<comment type="catalytic activity">
    <reaction evidence="1">
        <text>tRNA(Glu) + L-glutamate + ATP = L-glutamyl-tRNA(Glu) + AMP + diphosphate</text>
        <dbReference type="Rhea" id="RHEA:23540"/>
        <dbReference type="Rhea" id="RHEA-COMP:9663"/>
        <dbReference type="Rhea" id="RHEA-COMP:9680"/>
        <dbReference type="ChEBI" id="CHEBI:29985"/>
        <dbReference type="ChEBI" id="CHEBI:30616"/>
        <dbReference type="ChEBI" id="CHEBI:33019"/>
        <dbReference type="ChEBI" id="CHEBI:78442"/>
        <dbReference type="ChEBI" id="CHEBI:78520"/>
        <dbReference type="ChEBI" id="CHEBI:456215"/>
        <dbReference type="EC" id="6.1.1.17"/>
    </reaction>
</comment>
<comment type="subunit">
    <text evidence="1">Monomer.</text>
</comment>
<comment type="subcellular location">
    <subcellularLocation>
        <location evidence="1">Cytoplasm</location>
    </subcellularLocation>
</comment>
<comment type="similarity">
    <text evidence="1">Belongs to the class-I aminoacyl-tRNA synthetase family. Glutamate--tRNA ligase type 1 subfamily.</text>
</comment>
<name>SYE_PECAS</name>
<organism>
    <name type="scientific">Pectobacterium atrosepticum (strain SCRI 1043 / ATCC BAA-672)</name>
    <name type="common">Erwinia carotovora subsp. atroseptica</name>
    <dbReference type="NCBI Taxonomy" id="218491"/>
    <lineage>
        <taxon>Bacteria</taxon>
        <taxon>Pseudomonadati</taxon>
        <taxon>Pseudomonadota</taxon>
        <taxon>Gammaproteobacteria</taxon>
        <taxon>Enterobacterales</taxon>
        <taxon>Pectobacteriaceae</taxon>
        <taxon>Pectobacterium</taxon>
    </lineage>
</organism>
<keyword id="KW-0030">Aminoacyl-tRNA synthetase</keyword>
<keyword id="KW-0067">ATP-binding</keyword>
<keyword id="KW-0963">Cytoplasm</keyword>
<keyword id="KW-0436">Ligase</keyword>
<keyword id="KW-0547">Nucleotide-binding</keyword>
<keyword id="KW-0648">Protein biosynthesis</keyword>
<keyword id="KW-1185">Reference proteome</keyword>
<reference key="1">
    <citation type="journal article" date="2004" name="Proc. Natl. Acad. Sci. U.S.A.">
        <title>Genome sequence of the enterobacterial phytopathogen Erwinia carotovora subsp. atroseptica and characterization of virulence factors.</title>
        <authorList>
            <person name="Bell K.S."/>
            <person name="Sebaihia M."/>
            <person name="Pritchard L."/>
            <person name="Holden M.T.G."/>
            <person name="Hyman L.J."/>
            <person name="Holeva M.C."/>
            <person name="Thomson N.R."/>
            <person name="Bentley S.D."/>
            <person name="Churcher L.J.C."/>
            <person name="Mungall K."/>
            <person name="Atkin R."/>
            <person name="Bason N."/>
            <person name="Brooks K."/>
            <person name="Chillingworth T."/>
            <person name="Clark K."/>
            <person name="Doggett J."/>
            <person name="Fraser A."/>
            <person name="Hance Z."/>
            <person name="Hauser H."/>
            <person name="Jagels K."/>
            <person name="Moule S."/>
            <person name="Norbertczak H."/>
            <person name="Ormond D."/>
            <person name="Price C."/>
            <person name="Quail M.A."/>
            <person name="Sanders M."/>
            <person name="Walker D."/>
            <person name="Whitehead S."/>
            <person name="Salmond G.P.C."/>
            <person name="Birch P.R.J."/>
            <person name="Parkhill J."/>
            <person name="Toth I.K."/>
        </authorList>
    </citation>
    <scope>NUCLEOTIDE SEQUENCE [LARGE SCALE GENOMIC DNA]</scope>
    <source>
        <strain>SCRI 1043 / ATCC BAA-672</strain>
    </source>
</reference>